<sequence>MIPVRGLEGRKVAVLGLGRSGLATARALEAGGAEPLLWDDSPEARAKAEGQGFTVTDLTRDRAFEGVALLVTSPGIPHLYPAPNPVIARAMAAGVPVDNDIGLFFRSFATRDWDAFDQMPRVVCVTGSNGKSTTTALIHHILSEAGRPTQMAGNIGRGVLDLDPARDGEVVVLELSSYQTDLARALTPDVAVFTNLSPDHLDRHGGMGGYFAAKRRLFAEGGPDRAVIGVDEPEGLYLAGQLSVAPEDDRVIRISSGQKLERFGWSVFARKGFLAEWRKGRQMASIDLRAMPGLPGAHNHQNACAAYAACRTLGLAPRQIEAALASFAGLPHRSQTVGEKGGVRFVNDSKATNVDSAAKALQAFPKIRWIAGGLGKDGGIVALQPHLGSVVKAYLIGHSARDFALQIGATDHEICETMERAVARAAEEAQPGEVVLLAPAAASFDQYPNFEKRGEDFMEKVKALL</sequence>
<keyword id="KW-0067">ATP-binding</keyword>
<keyword id="KW-0131">Cell cycle</keyword>
<keyword id="KW-0132">Cell division</keyword>
<keyword id="KW-0133">Cell shape</keyword>
<keyword id="KW-0961">Cell wall biogenesis/degradation</keyword>
<keyword id="KW-0963">Cytoplasm</keyword>
<keyword id="KW-0436">Ligase</keyword>
<keyword id="KW-0547">Nucleotide-binding</keyword>
<keyword id="KW-0573">Peptidoglycan synthesis</keyword>
<reference key="1">
    <citation type="journal article" date="2009" name="J. Bacteriol.">
        <title>Complete genome sequence of Rhodobacter sphaeroides KD131.</title>
        <authorList>
            <person name="Lim S.-K."/>
            <person name="Kim S.J."/>
            <person name="Cha S.H."/>
            <person name="Oh Y.-K."/>
            <person name="Rhee H.-J."/>
            <person name="Kim M.-S."/>
            <person name="Lee J.K."/>
        </authorList>
    </citation>
    <scope>NUCLEOTIDE SEQUENCE [LARGE SCALE GENOMIC DNA]</scope>
    <source>
        <strain>KD131 / KCTC 12085</strain>
    </source>
</reference>
<gene>
    <name evidence="1" type="primary">murD</name>
    <name type="ordered locus">RSKD131_0413</name>
</gene>
<proteinExistence type="inferred from homology"/>
<evidence type="ECO:0000255" key="1">
    <source>
        <dbReference type="HAMAP-Rule" id="MF_00639"/>
    </source>
</evidence>
<name>MURD_CERSK</name>
<organism>
    <name type="scientific">Cereibacter sphaeroides (strain KD131 / KCTC 12085)</name>
    <name type="common">Rhodobacter sphaeroides</name>
    <dbReference type="NCBI Taxonomy" id="557760"/>
    <lineage>
        <taxon>Bacteria</taxon>
        <taxon>Pseudomonadati</taxon>
        <taxon>Pseudomonadota</taxon>
        <taxon>Alphaproteobacteria</taxon>
        <taxon>Rhodobacterales</taxon>
        <taxon>Paracoccaceae</taxon>
        <taxon>Cereibacter</taxon>
    </lineage>
</organism>
<accession>B9KNJ5</accession>
<dbReference type="EC" id="6.3.2.9" evidence="1"/>
<dbReference type="EMBL" id="CP001150">
    <property type="protein sequence ID" value="ACM00273.1"/>
    <property type="molecule type" value="Genomic_DNA"/>
</dbReference>
<dbReference type="RefSeq" id="WP_012643700.1">
    <property type="nucleotide sequence ID" value="NC_011963.1"/>
</dbReference>
<dbReference type="SMR" id="B9KNJ5"/>
<dbReference type="GeneID" id="67445875"/>
<dbReference type="KEGG" id="rsk:RSKD131_0413"/>
<dbReference type="HOGENOM" id="CLU_032540_3_0_5"/>
<dbReference type="UniPathway" id="UPA00219"/>
<dbReference type="GO" id="GO:0005737">
    <property type="term" value="C:cytoplasm"/>
    <property type="evidence" value="ECO:0007669"/>
    <property type="project" value="UniProtKB-SubCell"/>
</dbReference>
<dbReference type="GO" id="GO:0005524">
    <property type="term" value="F:ATP binding"/>
    <property type="evidence" value="ECO:0007669"/>
    <property type="project" value="UniProtKB-UniRule"/>
</dbReference>
<dbReference type="GO" id="GO:0008764">
    <property type="term" value="F:UDP-N-acetylmuramoylalanine-D-glutamate ligase activity"/>
    <property type="evidence" value="ECO:0007669"/>
    <property type="project" value="UniProtKB-UniRule"/>
</dbReference>
<dbReference type="GO" id="GO:0051301">
    <property type="term" value="P:cell division"/>
    <property type="evidence" value="ECO:0007669"/>
    <property type="project" value="UniProtKB-KW"/>
</dbReference>
<dbReference type="GO" id="GO:0071555">
    <property type="term" value="P:cell wall organization"/>
    <property type="evidence" value="ECO:0007669"/>
    <property type="project" value="UniProtKB-KW"/>
</dbReference>
<dbReference type="GO" id="GO:0009252">
    <property type="term" value="P:peptidoglycan biosynthetic process"/>
    <property type="evidence" value="ECO:0007669"/>
    <property type="project" value="UniProtKB-UniRule"/>
</dbReference>
<dbReference type="GO" id="GO:0008360">
    <property type="term" value="P:regulation of cell shape"/>
    <property type="evidence" value="ECO:0007669"/>
    <property type="project" value="UniProtKB-KW"/>
</dbReference>
<dbReference type="Gene3D" id="3.90.190.20">
    <property type="entry name" value="Mur ligase, C-terminal domain"/>
    <property type="match status" value="1"/>
</dbReference>
<dbReference type="Gene3D" id="3.40.1190.10">
    <property type="entry name" value="Mur-like, catalytic domain"/>
    <property type="match status" value="1"/>
</dbReference>
<dbReference type="Gene3D" id="3.40.50.720">
    <property type="entry name" value="NAD(P)-binding Rossmann-like Domain"/>
    <property type="match status" value="1"/>
</dbReference>
<dbReference type="HAMAP" id="MF_00639">
    <property type="entry name" value="MurD"/>
    <property type="match status" value="1"/>
</dbReference>
<dbReference type="InterPro" id="IPR036565">
    <property type="entry name" value="Mur-like_cat_sf"/>
</dbReference>
<dbReference type="InterPro" id="IPR004101">
    <property type="entry name" value="Mur_ligase_C"/>
</dbReference>
<dbReference type="InterPro" id="IPR036615">
    <property type="entry name" value="Mur_ligase_C_dom_sf"/>
</dbReference>
<dbReference type="InterPro" id="IPR013221">
    <property type="entry name" value="Mur_ligase_cen"/>
</dbReference>
<dbReference type="InterPro" id="IPR005762">
    <property type="entry name" value="MurD"/>
</dbReference>
<dbReference type="NCBIfam" id="TIGR01087">
    <property type="entry name" value="murD"/>
    <property type="match status" value="1"/>
</dbReference>
<dbReference type="PANTHER" id="PTHR43692">
    <property type="entry name" value="UDP-N-ACETYLMURAMOYLALANINE--D-GLUTAMATE LIGASE"/>
    <property type="match status" value="1"/>
</dbReference>
<dbReference type="PANTHER" id="PTHR43692:SF1">
    <property type="entry name" value="UDP-N-ACETYLMURAMOYLALANINE--D-GLUTAMATE LIGASE"/>
    <property type="match status" value="1"/>
</dbReference>
<dbReference type="Pfam" id="PF02875">
    <property type="entry name" value="Mur_ligase_C"/>
    <property type="match status" value="1"/>
</dbReference>
<dbReference type="Pfam" id="PF08245">
    <property type="entry name" value="Mur_ligase_M"/>
    <property type="match status" value="1"/>
</dbReference>
<dbReference type="SUPFAM" id="SSF51984">
    <property type="entry name" value="MurCD N-terminal domain"/>
    <property type="match status" value="1"/>
</dbReference>
<dbReference type="SUPFAM" id="SSF53623">
    <property type="entry name" value="MurD-like peptide ligases, catalytic domain"/>
    <property type="match status" value="1"/>
</dbReference>
<dbReference type="SUPFAM" id="SSF53244">
    <property type="entry name" value="MurD-like peptide ligases, peptide-binding domain"/>
    <property type="match status" value="1"/>
</dbReference>
<comment type="function">
    <text evidence="1">Cell wall formation. Catalyzes the addition of glutamate to the nucleotide precursor UDP-N-acetylmuramoyl-L-alanine (UMA).</text>
</comment>
<comment type="catalytic activity">
    <reaction evidence="1">
        <text>UDP-N-acetyl-alpha-D-muramoyl-L-alanine + D-glutamate + ATP = UDP-N-acetyl-alpha-D-muramoyl-L-alanyl-D-glutamate + ADP + phosphate + H(+)</text>
        <dbReference type="Rhea" id="RHEA:16429"/>
        <dbReference type="ChEBI" id="CHEBI:15378"/>
        <dbReference type="ChEBI" id="CHEBI:29986"/>
        <dbReference type="ChEBI" id="CHEBI:30616"/>
        <dbReference type="ChEBI" id="CHEBI:43474"/>
        <dbReference type="ChEBI" id="CHEBI:83898"/>
        <dbReference type="ChEBI" id="CHEBI:83900"/>
        <dbReference type="ChEBI" id="CHEBI:456216"/>
        <dbReference type="EC" id="6.3.2.9"/>
    </reaction>
</comment>
<comment type="pathway">
    <text evidence="1">Cell wall biogenesis; peptidoglycan biosynthesis.</text>
</comment>
<comment type="subcellular location">
    <subcellularLocation>
        <location evidence="1">Cytoplasm</location>
    </subcellularLocation>
</comment>
<comment type="similarity">
    <text evidence="1">Belongs to the MurCDEF family.</text>
</comment>
<protein>
    <recommendedName>
        <fullName evidence="1">UDP-N-acetylmuramoylalanine--D-glutamate ligase</fullName>
        <ecNumber evidence="1">6.3.2.9</ecNumber>
    </recommendedName>
    <alternativeName>
        <fullName evidence="1">D-glutamic acid-adding enzyme</fullName>
    </alternativeName>
    <alternativeName>
        <fullName evidence="1">UDP-N-acetylmuramoyl-L-alanyl-D-glutamate synthetase</fullName>
    </alternativeName>
</protein>
<feature type="chain" id="PRO_1000147411" description="UDP-N-acetylmuramoylalanine--D-glutamate ligase">
    <location>
        <begin position="1"/>
        <end position="465"/>
    </location>
</feature>
<feature type="binding site" evidence="1">
    <location>
        <begin position="127"/>
        <end position="133"/>
    </location>
    <ligand>
        <name>ATP</name>
        <dbReference type="ChEBI" id="CHEBI:30616"/>
    </ligand>
</feature>